<accession>Q58938</accession>
<proteinExistence type="inferred from homology"/>
<feature type="chain" id="PRO_0000151391" description="Ketol-acid reductoisomerase (NADP(+))">
    <location>
        <begin position="1"/>
        <end position="330"/>
    </location>
</feature>
<feature type="domain" description="KARI N-terminal Rossmann" evidence="2">
    <location>
        <begin position="2"/>
        <end position="182"/>
    </location>
</feature>
<feature type="domain" description="KARI C-terminal knotted" evidence="3">
    <location>
        <begin position="183"/>
        <end position="328"/>
    </location>
</feature>
<feature type="active site" evidence="1">
    <location>
        <position position="108"/>
    </location>
</feature>
<feature type="binding site" evidence="1">
    <location>
        <begin position="25"/>
        <end position="28"/>
    </location>
    <ligand>
        <name>NADP(+)</name>
        <dbReference type="ChEBI" id="CHEBI:58349"/>
    </ligand>
</feature>
<feature type="binding site" evidence="1">
    <location>
        <position position="48"/>
    </location>
    <ligand>
        <name>NADP(+)</name>
        <dbReference type="ChEBI" id="CHEBI:58349"/>
    </ligand>
</feature>
<feature type="binding site" evidence="1">
    <location>
        <position position="53"/>
    </location>
    <ligand>
        <name>NADP(+)</name>
        <dbReference type="ChEBI" id="CHEBI:58349"/>
    </ligand>
</feature>
<feature type="binding site" evidence="1">
    <location>
        <begin position="83"/>
        <end position="86"/>
    </location>
    <ligand>
        <name>NADP(+)</name>
        <dbReference type="ChEBI" id="CHEBI:58349"/>
    </ligand>
</feature>
<feature type="binding site" evidence="1">
    <location>
        <position position="134"/>
    </location>
    <ligand>
        <name>NADP(+)</name>
        <dbReference type="ChEBI" id="CHEBI:58349"/>
    </ligand>
</feature>
<feature type="binding site" evidence="1">
    <location>
        <position position="191"/>
    </location>
    <ligand>
        <name>Mg(2+)</name>
        <dbReference type="ChEBI" id="CHEBI:18420"/>
        <label>1</label>
    </ligand>
</feature>
<feature type="binding site" evidence="1">
    <location>
        <position position="191"/>
    </location>
    <ligand>
        <name>Mg(2+)</name>
        <dbReference type="ChEBI" id="CHEBI:18420"/>
        <label>2</label>
    </ligand>
</feature>
<feature type="binding site" evidence="1">
    <location>
        <position position="195"/>
    </location>
    <ligand>
        <name>Mg(2+)</name>
        <dbReference type="ChEBI" id="CHEBI:18420"/>
        <label>1</label>
    </ligand>
</feature>
<feature type="binding site" evidence="1">
    <location>
        <position position="227"/>
    </location>
    <ligand>
        <name>Mg(2+)</name>
        <dbReference type="ChEBI" id="CHEBI:18420"/>
        <label>2</label>
    </ligand>
</feature>
<feature type="binding site" evidence="1">
    <location>
        <position position="231"/>
    </location>
    <ligand>
        <name>Mg(2+)</name>
        <dbReference type="ChEBI" id="CHEBI:18420"/>
        <label>2</label>
    </ligand>
</feature>
<feature type="binding site" evidence="1">
    <location>
        <position position="252"/>
    </location>
    <ligand>
        <name>substrate</name>
    </ligand>
</feature>
<reference key="1">
    <citation type="journal article" date="1996" name="Science">
        <title>Complete genome sequence of the methanogenic archaeon, Methanococcus jannaschii.</title>
        <authorList>
            <person name="Bult C.J."/>
            <person name="White O."/>
            <person name="Olsen G.J."/>
            <person name="Zhou L."/>
            <person name="Fleischmann R.D."/>
            <person name="Sutton G.G."/>
            <person name="Blake J.A."/>
            <person name="FitzGerald L.M."/>
            <person name="Clayton R.A."/>
            <person name="Gocayne J.D."/>
            <person name="Kerlavage A.R."/>
            <person name="Dougherty B.A."/>
            <person name="Tomb J.-F."/>
            <person name="Adams M.D."/>
            <person name="Reich C.I."/>
            <person name="Overbeek R."/>
            <person name="Kirkness E.F."/>
            <person name="Weinstock K.G."/>
            <person name="Merrick J.M."/>
            <person name="Glodek A."/>
            <person name="Scott J.L."/>
            <person name="Geoghagen N.S.M."/>
            <person name="Weidman J.F."/>
            <person name="Fuhrmann J.L."/>
            <person name="Nguyen D."/>
            <person name="Utterback T.R."/>
            <person name="Kelley J.M."/>
            <person name="Peterson J.D."/>
            <person name="Sadow P.W."/>
            <person name="Hanna M.C."/>
            <person name="Cotton M.D."/>
            <person name="Roberts K.M."/>
            <person name="Hurst M.A."/>
            <person name="Kaine B.P."/>
            <person name="Borodovsky M."/>
            <person name="Klenk H.-P."/>
            <person name="Fraser C.M."/>
            <person name="Smith H.O."/>
            <person name="Woese C.R."/>
            <person name="Venter J.C."/>
        </authorList>
    </citation>
    <scope>NUCLEOTIDE SEQUENCE [LARGE SCALE GENOMIC DNA]</scope>
    <source>
        <strain>ATCC 43067 / DSM 2661 / JAL-1 / JCM 10045 / NBRC 100440</strain>
    </source>
</reference>
<gene>
    <name evidence="1" type="primary">ilvC</name>
    <name type="ordered locus">MJ1543</name>
</gene>
<keyword id="KW-0028">Amino-acid biosynthesis</keyword>
<keyword id="KW-0100">Branched-chain amino acid biosynthesis</keyword>
<keyword id="KW-0460">Magnesium</keyword>
<keyword id="KW-0479">Metal-binding</keyword>
<keyword id="KW-0521">NADP</keyword>
<keyword id="KW-0560">Oxidoreductase</keyword>
<keyword id="KW-1185">Reference proteome</keyword>
<sequence length="330" mass="36827">MVKIFYDKDVTFDAVKDKTIAVIGYGSQGRAQALNMKDSGLNVIVGLRPNGASWNKAIKDGHKVMTIEEAAEKADIIHILIPDEVQPAVYKKQIEPYLTEGKTISFSHGYNIHYGFIRPPENVNITMVAPKSPGAMVRKTYEEGFGVPGLVAVERDYTGDALQIALGMAKGIGLTKVGVIQTTFREETETDLFGEQVVLCGGVTELIKAAFETLVEAGYAPEMAYFETCHELKLIVDLIYQKGLQGMWENVSNTAEYGGLTRRARVINEESRKAMKEILKEIQDGRFAKEWSLEREAGFPHLNALRRLEKEHLIEKVGKELRKMCGLEKE</sequence>
<evidence type="ECO:0000255" key="1">
    <source>
        <dbReference type="HAMAP-Rule" id="MF_00435"/>
    </source>
</evidence>
<evidence type="ECO:0000255" key="2">
    <source>
        <dbReference type="PROSITE-ProRule" id="PRU01197"/>
    </source>
</evidence>
<evidence type="ECO:0000255" key="3">
    <source>
        <dbReference type="PROSITE-ProRule" id="PRU01198"/>
    </source>
</evidence>
<evidence type="ECO:0000305" key="4"/>
<name>ILVC_METJA</name>
<dbReference type="EC" id="1.1.1.86" evidence="1"/>
<dbReference type="EMBL" id="L77117">
    <property type="protein sequence ID" value="AAB99561.1"/>
    <property type="status" value="ALT_INIT"/>
    <property type="molecule type" value="Genomic_DNA"/>
</dbReference>
<dbReference type="PIR" id="F64492">
    <property type="entry name" value="F64492"/>
</dbReference>
<dbReference type="RefSeq" id="WP_064496863.1">
    <property type="nucleotide sequence ID" value="NC_000909.1"/>
</dbReference>
<dbReference type="SMR" id="Q58938"/>
<dbReference type="FunCoup" id="Q58938">
    <property type="interactions" value="167"/>
</dbReference>
<dbReference type="STRING" id="243232.MJ_1543"/>
<dbReference type="PaxDb" id="243232-MJ_1543"/>
<dbReference type="EnsemblBacteria" id="AAB99561">
    <property type="protein sequence ID" value="AAB99561"/>
    <property type="gene ID" value="MJ_1543"/>
</dbReference>
<dbReference type="GeneID" id="1452451"/>
<dbReference type="KEGG" id="mja:MJ_1543"/>
<dbReference type="eggNOG" id="arCOG04465">
    <property type="taxonomic scope" value="Archaea"/>
</dbReference>
<dbReference type="HOGENOM" id="CLU_033821_0_1_2"/>
<dbReference type="InParanoid" id="Q58938"/>
<dbReference type="OrthoDB" id="6064at2157"/>
<dbReference type="PhylomeDB" id="Q58938"/>
<dbReference type="UniPathway" id="UPA00047">
    <property type="reaction ID" value="UER00056"/>
</dbReference>
<dbReference type="UniPathway" id="UPA00049">
    <property type="reaction ID" value="UER00060"/>
</dbReference>
<dbReference type="Proteomes" id="UP000000805">
    <property type="component" value="Chromosome"/>
</dbReference>
<dbReference type="GO" id="GO:0004455">
    <property type="term" value="F:ketol-acid reductoisomerase activity"/>
    <property type="evidence" value="ECO:0000318"/>
    <property type="project" value="GO_Central"/>
</dbReference>
<dbReference type="GO" id="GO:0000287">
    <property type="term" value="F:magnesium ion binding"/>
    <property type="evidence" value="ECO:0007669"/>
    <property type="project" value="UniProtKB-UniRule"/>
</dbReference>
<dbReference type="GO" id="GO:0050661">
    <property type="term" value="F:NADP binding"/>
    <property type="evidence" value="ECO:0007669"/>
    <property type="project" value="InterPro"/>
</dbReference>
<dbReference type="GO" id="GO:0009097">
    <property type="term" value="P:isoleucine biosynthetic process"/>
    <property type="evidence" value="ECO:0000318"/>
    <property type="project" value="GO_Central"/>
</dbReference>
<dbReference type="GO" id="GO:0009099">
    <property type="term" value="P:L-valine biosynthetic process"/>
    <property type="evidence" value="ECO:0000318"/>
    <property type="project" value="GO_Central"/>
</dbReference>
<dbReference type="FunFam" id="3.40.50.720:FF:000023">
    <property type="entry name" value="Ketol-acid reductoisomerase (NADP(+))"/>
    <property type="match status" value="1"/>
</dbReference>
<dbReference type="Gene3D" id="6.10.240.10">
    <property type="match status" value="1"/>
</dbReference>
<dbReference type="Gene3D" id="3.40.50.720">
    <property type="entry name" value="NAD(P)-binding Rossmann-like Domain"/>
    <property type="match status" value="1"/>
</dbReference>
<dbReference type="HAMAP" id="MF_00435">
    <property type="entry name" value="IlvC"/>
    <property type="match status" value="1"/>
</dbReference>
<dbReference type="InterPro" id="IPR008927">
    <property type="entry name" value="6-PGluconate_DH-like_C_sf"/>
</dbReference>
<dbReference type="InterPro" id="IPR013023">
    <property type="entry name" value="KARI"/>
</dbReference>
<dbReference type="InterPro" id="IPR000506">
    <property type="entry name" value="KARI_C"/>
</dbReference>
<dbReference type="InterPro" id="IPR013116">
    <property type="entry name" value="KARI_N"/>
</dbReference>
<dbReference type="InterPro" id="IPR014359">
    <property type="entry name" value="KARI_prok"/>
</dbReference>
<dbReference type="InterPro" id="IPR036291">
    <property type="entry name" value="NAD(P)-bd_dom_sf"/>
</dbReference>
<dbReference type="NCBIfam" id="TIGR00465">
    <property type="entry name" value="ilvC"/>
    <property type="match status" value="1"/>
</dbReference>
<dbReference type="NCBIfam" id="NF004017">
    <property type="entry name" value="PRK05479.1"/>
    <property type="match status" value="1"/>
</dbReference>
<dbReference type="NCBIfam" id="NF009940">
    <property type="entry name" value="PRK13403.1"/>
    <property type="match status" value="1"/>
</dbReference>
<dbReference type="PANTHER" id="PTHR21371">
    <property type="entry name" value="KETOL-ACID REDUCTOISOMERASE, MITOCHONDRIAL"/>
    <property type="match status" value="1"/>
</dbReference>
<dbReference type="PANTHER" id="PTHR21371:SF1">
    <property type="entry name" value="KETOL-ACID REDUCTOISOMERASE, MITOCHONDRIAL"/>
    <property type="match status" value="1"/>
</dbReference>
<dbReference type="Pfam" id="PF01450">
    <property type="entry name" value="KARI_C"/>
    <property type="match status" value="1"/>
</dbReference>
<dbReference type="Pfam" id="PF07991">
    <property type="entry name" value="KARI_N"/>
    <property type="match status" value="1"/>
</dbReference>
<dbReference type="PIRSF" id="PIRSF000116">
    <property type="entry name" value="IlvC_gammaproteo"/>
    <property type="match status" value="1"/>
</dbReference>
<dbReference type="SUPFAM" id="SSF48179">
    <property type="entry name" value="6-phosphogluconate dehydrogenase C-terminal domain-like"/>
    <property type="match status" value="1"/>
</dbReference>
<dbReference type="SUPFAM" id="SSF51735">
    <property type="entry name" value="NAD(P)-binding Rossmann-fold domains"/>
    <property type="match status" value="1"/>
</dbReference>
<dbReference type="PROSITE" id="PS51851">
    <property type="entry name" value="KARI_C"/>
    <property type="match status" value="1"/>
</dbReference>
<dbReference type="PROSITE" id="PS51850">
    <property type="entry name" value="KARI_N"/>
    <property type="match status" value="1"/>
</dbReference>
<protein>
    <recommendedName>
        <fullName evidence="1">Ketol-acid reductoisomerase (NADP(+))</fullName>
        <shortName evidence="1">KARI</shortName>
        <ecNumber evidence="1">1.1.1.86</ecNumber>
    </recommendedName>
    <alternativeName>
        <fullName evidence="1">Acetohydroxy-acid isomeroreductase</fullName>
        <shortName evidence="1">AHIR</shortName>
    </alternativeName>
    <alternativeName>
        <fullName evidence="1">Alpha-keto-beta-hydroxylacyl reductoisomerase</fullName>
    </alternativeName>
    <alternativeName>
        <fullName evidence="1">Ketol-acid reductoisomerase type 1</fullName>
    </alternativeName>
    <alternativeName>
        <fullName evidence="1">Ketol-acid reductoisomerase type I</fullName>
    </alternativeName>
</protein>
<organism>
    <name type="scientific">Methanocaldococcus jannaschii (strain ATCC 43067 / DSM 2661 / JAL-1 / JCM 10045 / NBRC 100440)</name>
    <name type="common">Methanococcus jannaschii</name>
    <dbReference type="NCBI Taxonomy" id="243232"/>
    <lineage>
        <taxon>Archaea</taxon>
        <taxon>Methanobacteriati</taxon>
        <taxon>Methanobacteriota</taxon>
        <taxon>Methanomada group</taxon>
        <taxon>Methanococci</taxon>
        <taxon>Methanococcales</taxon>
        <taxon>Methanocaldococcaceae</taxon>
        <taxon>Methanocaldococcus</taxon>
    </lineage>
</organism>
<comment type="function">
    <text evidence="1">Involved in the biosynthesis of branched-chain amino acids (BCAA). Catalyzes an alkyl-migration followed by a ketol-acid reduction of (S)-2-acetolactate (S2AL) to yield (R)-2,3-dihydroxy-isovalerate. In the isomerase reaction, S2AL is rearranged via a Mg-dependent methyl migration to produce 3-hydroxy-3-methyl-2-ketobutyrate (HMKB). In the reductase reaction, this 2-ketoacid undergoes a metal-dependent reduction by NADPH to yield (R)-2,3-dihydroxy-isovalerate.</text>
</comment>
<comment type="catalytic activity">
    <reaction evidence="1">
        <text>(2R)-2,3-dihydroxy-3-methylbutanoate + NADP(+) = (2S)-2-acetolactate + NADPH + H(+)</text>
        <dbReference type="Rhea" id="RHEA:22068"/>
        <dbReference type="ChEBI" id="CHEBI:15378"/>
        <dbReference type="ChEBI" id="CHEBI:49072"/>
        <dbReference type="ChEBI" id="CHEBI:57783"/>
        <dbReference type="ChEBI" id="CHEBI:58349"/>
        <dbReference type="ChEBI" id="CHEBI:58476"/>
        <dbReference type="EC" id="1.1.1.86"/>
    </reaction>
</comment>
<comment type="catalytic activity">
    <reaction evidence="1">
        <text>(2R,3R)-2,3-dihydroxy-3-methylpentanoate + NADP(+) = (S)-2-ethyl-2-hydroxy-3-oxobutanoate + NADPH + H(+)</text>
        <dbReference type="Rhea" id="RHEA:13493"/>
        <dbReference type="ChEBI" id="CHEBI:15378"/>
        <dbReference type="ChEBI" id="CHEBI:49256"/>
        <dbReference type="ChEBI" id="CHEBI:49258"/>
        <dbReference type="ChEBI" id="CHEBI:57783"/>
        <dbReference type="ChEBI" id="CHEBI:58349"/>
        <dbReference type="EC" id="1.1.1.86"/>
    </reaction>
</comment>
<comment type="cofactor">
    <cofactor evidence="1">
        <name>Mg(2+)</name>
        <dbReference type="ChEBI" id="CHEBI:18420"/>
    </cofactor>
    <text evidence="1">Binds 2 magnesium ions per subunit.</text>
</comment>
<comment type="pathway">
    <text evidence="1">Amino-acid biosynthesis; L-isoleucine biosynthesis; L-isoleucine from 2-oxobutanoate: step 2/4.</text>
</comment>
<comment type="pathway">
    <text evidence="1">Amino-acid biosynthesis; L-valine biosynthesis; L-valine from pyruvate: step 2/4.</text>
</comment>
<comment type="similarity">
    <text evidence="1">Belongs to the ketol-acid reductoisomerase family.</text>
</comment>
<comment type="sequence caution" evidence="4">
    <conflict type="erroneous initiation">
        <sequence resource="EMBL-CDS" id="AAB99561"/>
    </conflict>
</comment>